<proteinExistence type="inferred from homology"/>
<evidence type="ECO:0000255" key="1">
    <source>
        <dbReference type="HAMAP-Rule" id="MF_04038"/>
    </source>
</evidence>
<accession>Q9E6Q9</accession>
<dbReference type="EMBL" id="AF243438">
    <property type="protein sequence ID" value="AAG14199.1"/>
    <property type="molecule type" value="Genomic_DNA"/>
</dbReference>
<dbReference type="RefSeq" id="YP_001033935.1">
    <property type="nucleotide sequence ID" value="NC_002229.3"/>
</dbReference>
<dbReference type="SMR" id="Q9E6Q9"/>
<dbReference type="GeneID" id="4811480"/>
<dbReference type="KEGG" id="vg:4811480"/>
<dbReference type="Proteomes" id="UP000008072">
    <property type="component" value="Segment"/>
</dbReference>
<dbReference type="GO" id="GO:0044177">
    <property type="term" value="C:host cell Golgi apparatus"/>
    <property type="evidence" value="ECO:0007669"/>
    <property type="project" value="UniProtKB-SubCell"/>
</dbReference>
<dbReference type="GO" id="GO:0019033">
    <property type="term" value="C:viral tegument"/>
    <property type="evidence" value="ECO:0007669"/>
    <property type="project" value="UniProtKB-SubCell"/>
</dbReference>
<dbReference type="HAMAP" id="MF_04038">
    <property type="entry name" value="HSV_CEP1"/>
    <property type="match status" value="1"/>
</dbReference>
<dbReference type="InterPro" id="IPR002600">
    <property type="entry name" value="Herpes_UL7"/>
</dbReference>
<dbReference type="Pfam" id="PF01677">
    <property type="entry name" value="Herpes_UL7"/>
    <property type="match status" value="1"/>
</dbReference>
<feature type="chain" id="PRO_0000406584" description="Cytoplasmic envelopment protein 1">
    <location>
        <begin position="1"/>
        <end position="305"/>
    </location>
</feature>
<protein>
    <recommendedName>
        <fullName evidence="1">Cytoplasmic envelopment protein 1</fullName>
    </recommendedName>
</protein>
<gene>
    <name type="primary">MDV019</name>
</gene>
<keyword id="KW-1035">Host cytoplasm</keyword>
<keyword id="KW-1040">Host Golgi apparatus</keyword>
<keyword id="KW-1185">Reference proteome</keyword>
<keyword id="KW-0946">Virion</keyword>
<keyword id="KW-0920">Virion tegument</keyword>
<sequence>MEEEMTSILHPLDVSDTLDALVINAIDGTGNRDAIIEELSRQPMARMMMEVREINGVPTQFTGVSVYKLRVANCIRRLHLILAGTETDEEISSDIYYTQCIANPAFKGFIFMILTAMEDVVKTIGIPPPLLKYRFVSYHPAEPLDFALCLLISYLENRNVSSSDPSLYVQLQSFLKYAWSTVTPMRKMRRFLCITNTWLLNTLMELSSISPFDSNHVLPHYIIYKHLSSTNGVCDVLISLYECNNLGEAFQVPVSTRGKCSIVINKGLLNGAFQQKWLSDIICDWWHYGRNNLRGEECLFHTYQK</sequence>
<reference key="1">
    <citation type="journal article" date="2000" name="J. Virol.">
        <title>The genome of a very virulent Marek's disease virus.</title>
        <authorList>
            <person name="Tulman E.R."/>
            <person name="Afonso C.L."/>
            <person name="Lu Z."/>
            <person name="Zsak L."/>
            <person name="Rock D.L."/>
            <person name="Kutish G.F."/>
        </authorList>
    </citation>
    <scope>NUCLEOTIDE SEQUENCE [LARGE SCALE GENOMIC DNA]</scope>
</reference>
<comment type="function">
    <text evidence="1">Plays a critical role in cytoplasmic virus egress. Participates in the final step of tegumentation and envelope acquisition within the host cytoplasm.</text>
</comment>
<comment type="subcellular location">
    <subcellularLocation>
        <location evidence="1">Virion</location>
    </subcellularLocation>
    <subcellularLocation>
        <location evidence="1">Virion tegument</location>
    </subcellularLocation>
    <subcellularLocation>
        <location evidence="1">Host cytoplasm</location>
    </subcellularLocation>
    <subcellularLocation>
        <location evidence="1">Host Golgi apparatus</location>
    </subcellularLocation>
</comment>
<comment type="similarity">
    <text evidence="1">Belongs to the herpesviridae cytoplasmic envelopment protein 1 family.</text>
</comment>
<name>CEP1_GAHVM</name>
<organismHost>
    <name type="scientific">Gallus gallus</name>
    <name type="common">Chicken</name>
    <dbReference type="NCBI Taxonomy" id="9031"/>
</organismHost>
<organism>
    <name type="scientific">Gallid herpesvirus 2 (strain Chicken/Md5/ATCC VR-987)</name>
    <name type="common">GaHV-2</name>
    <name type="synonym">Marek's disease herpesvirus type 1</name>
    <dbReference type="NCBI Taxonomy" id="10389"/>
    <lineage>
        <taxon>Viruses</taxon>
        <taxon>Duplodnaviria</taxon>
        <taxon>Heunggongvirae</taxon>
        <taxon>Peploviricota</taxon>
        <taxon>Herviviricetes</taxon>
        <taxon>Herpesvirales</taxon>
        <taxon>Orthoherpesviridae</taxon>
        <taxon>Alphaherpesvirinae</taxon>
        <taxon>Mardivirus</taxon>
        <taxon>Mardivirus gallidalpha2</taxon>
        <taxon>Gallid alphaherpesvirus 2</taxon>
    </lineage>
</organism>